<dbReference type="EMBL" id="AF032370">
    <property type="protein sequence ID" value="AAB86960.1"/>
    <property type="molecule type" value="mRNA"/>
</dbReference>
<dbReference type="PIR" id="T01328">
    <property type="entry name" value="T01328"/>
</dbReference>
<dbReference type="RefSeq" id="NP_001104885.1">
    <property type="nucleotide sequence ID" value="NM_001111415.1"/>
</dbReference>
<dbReference type="SMR" id="O22655"/>
<dbReference type="FunCoup" id="O22655">
    <property type="interactions" value="734"/>
</dbReference>
<dbReference type="STRING" id="4577.O22655"/>
<dbReference type="Allergome" id="3538">
    <property type="allergen name" value="Zea m 12.0104"/>
</dbReference>
<dbReference type="Allergome" id="682">
    <property type="allergen name" value="Zea m 12"/>
</dbReference>
<dbReference type="PaxDb" id="4577-GRMZM2G108780_P01"/>
<dbReference type="GeneID" id="541662"/>
<dbReference type="KEGG" id="zma:541662"/>
<dbReference type="eggNOG" id="KOG1755">
    <property type="taxonomic scope" value="Eukaryota"/>
</dbReference>
<dbReference type="HOGENOM" id="CLU_120772_0_1_1"/>
<dbReference type="InParanoid" id="O22655"/>
<dbReference type="OMA" id="PGECNTI"/>
<dbReference type="OrthoDB" id="421374at2759"/>
<dbReference type="Proteomes" id="UP000007305">
    <property type="component" value="Unplaced"/>
</dbReference>
<dbReference type="ExpressionAtlas" id="O22655">
    <property type="expression patterns" value="baseline and differential"/>
</dbReference>
<dbReference type="GO" id="GO:0005938">
    <property type="term" value="C:cell cortex"/>
    <property type="evidence" value="ECO:0000318"/>
    <property type="project" value="GO_Central"/>
</dbReference>
<dbReference type="GO" id="GO:0005856">
    <property type="term" value="C:cytoskeleton"/>
    <property type="evidence" value="ECO:0007669"/>
    <property type="project" value="UniProtKB-SubCell"/>
</dbReference>
<dbReference type="GO" id="GO:0003785">
    <property type="term" value="F:actin monomer binding"/>
    <property type="evidence" value="ECO:0000314"/>
    <property type="project" value="AgBase"/>
</dbReference>
<dbReference type="GO" id="GO:0070064">
    <property type="term" value="F:proline-rich region binding"/>
    <property type="evidence" value="ECO:0000314"/>
    <property type="project" value="AgBase"/>
</dbReference>
<dbReference type="GO" id="GO:0007097">
    <property type="term" value="P:nuclear migration"/>
    <property type="evidence" value="ECO:0000314"/>
    <property type="project" value="AgBase"/>
</dbReference>
<dbReference type="GO" id="GO:0009555">
    <property type="term" value="P:pollen development"/>
    <property type="evidence" value="ECO:0000304"/>
    <property type="project" value="AgBase"/>
</dbReference>
<dbReference type="GO" id="GO:0009860">
    <property type="term" value="P:pollen tube growth"/>
    <property type="evidence" value="ECO:0000304"/>
    <property type="project" value="AgBase"/>
</dbReference>
<dbReference type="GO" id="GO:0032956">
    <property type="term" value="P:regulation of actin cytoskeleton organization"/>
    <property type="evidence" value="ECO:0000304"/>
    <property type="project" value="AgBase"/>
</dbReference>
<dbReference type="CDD" id="cd00148">
    <property type="entry name" value="PROF"/>
    <property type="match status" value="1"/>
</dbReference>
<dbReference type="FunFam" id="3.30.450.30:FF:000001">
    <property type="entry name" value="Profilin"/>
    <property type="match status" value="1"/>
</dbReference>
<dbReference type="Gene3D" id="3.30.450.30">
    <property type="entry name" value="Dynein light chain 2a, cytoplasmic"/>
    <property type="match status" value="1"/>
</dbReference>
<dbReference type="InterPro" id="IPR048278">
    <property type="entry name" value="PFN"/>
</dbReference>
<dbReference type="InterPro" id="IPR005455">
    <property type="entry name" value="PFN_euk"/>
</dbReference>
<dbReference type="InterPro" id="IPR036140">
    <property type="entry name" value="PFN_sf"/>
</dbReference>
<dbReference type="InterPro" id="IPR027310">
    <property type="entry name" value="Profilin_CS"/>
</dbReference>
<dbReference type="PANTHER" id="PTHR11604">
    <property type="entry name" value="PROFILIN"/>
    <property type="match status" value="1"/>
</dbReference>
<dbReference type="PANTHER" id="PTHR11604:SF69">
    <property type="entry name" value="PROFILIN-4"/>
    <property type="match status" value="1"/>
</dbReference>
<dbReference type="Pfam" id="PF00235">
    <property type="entry name" value="Profilin"/>
    <property type="match status" value="1"/>
</dbReference>
<dbReference type="PRINTS" id="PR00392">
    <property type="entry name" value="PROFILIN"/>
</dbReference>
<dbReference type="PRINTS" id="PR01640">
    <property type="entry name" value="PROFILINPLNT"/>
</dbReference>
<dbReference type="SMART" id="SM00392">
    <property type="entry name" value="PROF"/>
    <property type="match status" value="1"/>
</dbReference>
<dbReference type="SUPFAM" id="SSF55770">
    <property type="entry name" value="Profilin (actin-binding protein)"/>
    <property type="match status" value="1"/>
</dbReference>
<dbReference type="PROSITE" id="PS00414">
    <property type="entry name" value="PROFILIN"/>
    <property type="match status" value="1"/>
</dbReference>
<comment type="function">
    <text>Binds to actin and affects the structure of the cytoskeleton. At high concentrations, profilin prevents the polymerization of actin, whereas it enhances it at low concentrations. By binding to PIP2, it inhibits the formation of IP3 and DG. Has a high affinity for poly-proline.</text>
</comment>
<comment type="subunit">
    <text>Occurs in many kinds of cells as a complex with monomeric actin in a 1:1 ratio.</text>
</comment>
<comment type="subcellular location">
    <subcellularLocation>
        <location>Cytoplasm</location>
        <location>Cytoskeleton</location>
    </subcellularLocation>
</comment>
<comment type="tissue specificity">
    <text>Expressed predominantly in endosperm but is also found at low levels in all tissues examined, including mature and germinated pollen.</text>
</comment>
<comment type="PTM">
    <text evidence="1">Phosphorylated by MAP kinases.</text>
</comment>
<comment type="polymorphism">
    <text>Several isoforms of the allergen exist due to polymorphism.</text>
</comment>
<comment type="allergen">
    <text>Causes an allergic reaction in human.</text>
</comment>
<comment type="similarity">
    <text evidence="2">Belongs to the profilin family.</text>
</comment>
<sequence>MSWQAYVDEHLMCEIEGQHLSAAAIVGHDGSVWAQSESFPELKPEEVAGIIKDFDEPGTLAPTGLFVGGTKYMVIQGEPGVVIRGKKGTGGITIKKTGMSLIIGVYDEPMTPGQCNMVVERLGDYLIEQGF</sequence>
<organism>
    <name type="scientific">Zea mays</name>
    <name type="common">Maize</name>
    <dbReference type="NCBI Taxonomy" id="4577"/>
    <lineage>
        <taxon>Eukaryota</taxon>
        <taxon>Viridiplantae</taxon>
        <taxon>Streptophyta</taxon>
        <taxon>Embryophyta</taxon>
        <taxon>Tracheophyta</taxon>
        <taxon>Spermatophyta</taxon>
        <taxon>Magnoliopsida</taxon>
        <taxon>Liliopsida</taxon>
        <taxon>Poales</taxon>
        <taxon>Poaceae</taxon>
        <taxon>PACMAD clade</taxon>
        <taxon>Panicoideae</taxon>
        <taxon>Andropogonodae</taxon>
        <taxon>Andropogoneae</taxon>
        <taxon>Tripsacinae</taxon>
        <taxon>Zea</taxon>
    </lineage>
</organism>
<proteinExistence type="evidence at protein level"/>
<protein>
    <recommendedName>
        <fullName>Profilin-4</fullName>
    </recommendedName>
    <alternativeName>
        <fullName>Pollen allergen Zea m 12</fullName>
    </alternativeName>
    <alternativeName>
        <fullName>ZmPRO4</fullName>
    </alternativeName>
    <allergenName>Zea m 12</allergenName>
</protein>
<name>PROF4_MAIZE</name>
<feature type="initiator methionine" description="Removed" evidence="1">
    <location>
        <position position="1"/>
    </location>
</feature>
<feature type="chain" id="PRO_0000199649" description="Profilin-4">
    <location>
        <begin position="2"/>
        <end position="131"/>
    </location>
</feature>
<feature type="short sequence motif" description="Involved in PIP2 interaction">
    <location>
        <begin position="81"/>
        <end position="97"/>
    </location>
</feature>
<feature type="modified residue" description="Phosphothreonine" evidence="1">
    <location>
        <position position="111"/>
    </location>
</feature>
<feature type="disulfide bond" evidence="2">
    <location>
        <begin position="13"/>
        <end position="115"/>
    </location>
</feature>
<keyword id="KW-0009">Actin-binding</keyword>
<keyword id="KW-0020">Allergen</keyword>
<keyword id="KW-0963">Cytoplasm</keyword>
<keyword id="KW-0206">Cytoskeleton</keyword>
<keyword id="KW-1015">Disulfide bond</keyword>
<keyword id="KW-0597">Phosphoprotein</keyword>
<keyword id="KW-1185">Reference proteome</keyword>
<reference key="1">
    <citation type="journal article" date="1998" name="Plant Cell">
        <title>Pollen profilin function depends on interaction with proline-rich motifs.</title>
        <authorList>
            <person name="Gibbon B.C."/>
            <person name="Zonia L.E."/>
            <person name="Kovar D.R."/>
            <person name="Hussey P.J."/>
            <person name="Staiger C.J."/>
        </authorList>
    </citation>
    <scope>NUCLEOTIDE SEQUENCE [MRNA]</scope>
    <scope>CHARACTERIZATION</scope>
    <source>
        <strain>cv. Wisconsin 64A2</strain>
    </source>
</reference>
<reference key="2">
    <citation type="journal article" date="1999" name="Plant Cell">
        <authorList>
            <person name="Gibbon B.C."/>
            <person name="Zonia L.E."/>
            <person name="Kovar D.R."/>
            <person name="Hussey P.J."/>
            <person name="Staiger C.J."/>
        </authorList>
    </citation>
    <scope>ERRATUM OF PUBMED:9634586</scope>
</reference>
<accession>O22655</accession>
<gene>
    <name type="primary">PRO4</name>
</gene>
<evidence type="ECO:0000250" key="1"/>
<evidence type="ECO:0000305" key="2"/>